<gene>
    <name type="primary">IL2RA</name>
</gene>
<keyword id="KW-1015">Disulfide bond</keyword>
<keyword id="KW-0325">Glycoprotein</keyword>
<keyword id="KW-0391">Immunity</keyword>
<keyword id="KW-0472">Membrane</keyword>
<keyword id="KW-0675">Receptor</keyword>
<keyword id="KW-1185">Reference proteome</keyword>
<keyword id="KW-0677">Repeat</keyword>
<keyword id="KW-0732">Signal</keyword>
<keyword id="KW-0768">Sushi</keyword>
<keyword id="KW-0812">Transmembrane</keyword>
<keyword id="KW-1133">Transmembrane helix</keyword>
<name>IL2RA_PIG</name>
<organism>
    <name type="scientific">Sus scrofa</name>
    <name type="common">Pig</name>
    <dbReference type="NCBI Taxonomy" id="9823"/>
    <lineage>
        <taxon>Eukaryota</taxon>
        <taxon>Metazoa</taxon>
        <taxon>Chordata</taxon>
        <taxon>Craniata</taxon>
        <taxon>Vertebrata</taxon>
        <taxon>Euteleostomi</taxon>
        <taxon>Mammalia</taxon>
        <taxon>Eutheria</taxon>
        <taxon>Laurasiatheria</taxon>
        <taxon>Artiodactyla</taxon>
        <taxon>Suina</taxon>
        <taxon>Suidae</taxon>
        <taxon>Sus</taxon>
    </lineage>
</organism>
<dbReference type="EMBL" id="U78317">
    <property type="protein sequence ID" value="AAC48781.1"/>
    <property type="molecule type" value="mRNA"/>
</dbReference>
<dbReference type="EMBL" id="AF052037">
    <property type="protein sequence ID" value="AAC27994.1"/>
    <property type="molecule type" value="Genomic_DNA"/>
</dbReference>
<dbReference type="RefSeq" id="NP_999000.1">
    <property type="nucleotide sequence ID" value="NM_213835.1"/>
</dbReference>
<dbReference type="SMR" id="O02733"/>
<dbReference type="FunCoup" id="O02733">
    <property type="interactions" value="244"/>
</dbReference>
<dbReference type="STRING" id="9823.ENSSSCP00000039694"/>
<dbReference type="GlyCosmos" id="O02733">
    <property type="glycosylation" value="5 sites, No reported glycans"/>
</dbReference>
<dbReference type="GlyGen" id="O02733">
    <property type="glycosylation" value="5 sites"/>
</dbReference>
<dbReference type="PaxDb" id="9823-ENSSSCP00000023036"/>
<dbReference type="Ensembl" id="ENSSSCT00110047417">
    <property type="protein sequence ID" value="ENSSSCP00110033373"/>
    <property type="gene ID" value="ENSSSCG00110024550"/>
</dbReference>
<dbReference type="Ensembl" id="ENSSSCT00115020637">
    <property type="protein sequence ID" value="ENSSSCP00115019538"/>
    <property type="gene ID" value="ENSSSCG00115011954"/>
</dbReference>
<dbReference type="GeneID" id="396814"/>
<dbReference type="KEGG" id="ssc:396814"/>
<dbReference type="CTD" id="3559"/>
<dbReference type="eggNOG" id="ENOG502SUAG">
    <property type="taxonomic scope" value="Eukaryota"/>
</dbReference>
<dbReference type="HOGENOM" id="CLU_3427951_0_0_1"/>
<dbReference type="InParanoid" id="O02733"/>
<dbReference type="OrthoDB" id="9833060at2759"/>
<dbReference type="Proteomes" id="UP000008227">
    <property type="component" value="Unplaced"/>
</dbReference>
<dbReference type="Proteomes" id="UP000314985">
    <property type="component" value="Unplaced"/>
</dbReference>
<dbReference type="Proteomes" id="UP000694570">
    <property type="component" value="Unplaced"/>
</dbReference>
<dbReference type="Proteomes" id="UP000694571">
    <property type="component" value="Unplaced"/>
</dbReference>
<dbReference type="Proteomes" id="UP000694720">
    <property type="component" value="Unplaced"/>
</dbReference>
<dbReference type="Proteomes" id="UP000694722">
    <property type="component" value="Unplaced"/>
</dbReference>
<dbReference type="Proteomes" id="UP000694723">
    <property type="component" value="Unplaced"/>
</dbReference>
<dbReference type="Proteomes" id="UP000694724">
    <property type="component" value="Unplaced"/>
</dbReference>
<dbReference type="Proteomes" id="UP000694725">
    <property type="component" value="Unplaced"/>
</dbReference>
<dbReference type="Proteomes" id="UP000694726">
    <property type="component" value="Unplaced"/>
</dbReference>
<dbReference type="Proteomes" id="UP000694727">
    <property type="component" value="Unplaced"/>
</dbReference>
<dbReference type="Proteomes" id="UP000694728">
    <property type="component" value="Unplaced"/>
</dbReference>
<dbReference type="GO" id="GO:0016020">
    <property type="term" value="C:membrane"/>
    <property type="evidence" value="ECO:0007669"/>
    <property type="project" value="UniProtKB-SubCell"/>
</dbReference>
<dbReference type="GO" id="GO:0019976">
    <property type="term" value="F:interleukin-2 binding"/>
    <property type="evidence" value="ECO:0000318"/>
    <property type="project" value="GO_Central"/>
</dbReference>
<dbReference type="GO" id="GO:0004911">
    <property type="term" value="F:interleukin-2 receptor activity"/>
    <property type="evidence" value="ECO:0007669"/>
    <property type="project" value="InterPro"/>
</dbReference>
<dbReference type="GO" id="GO:0002376">
    <property type="term" value="P:immune system process"/>
    <property type="evidence" value="ECO:0007669"/>
    <property type="project" value="UniProtKB-KW"/>
</dbReference>
<dbReference type="GO" id="GO:0006954">
    <property type="term" value="P:inflammatory response"/>
    <property type="evidence" value="ECO:0000318"/>
    <property type="project" value="GO_Central"/>
</dbReference>
<dbReference type="CDD" id="cd00033">
    <property type="entry name" value="CCP"/>
    <property type="match status" value="1"/>
</dbReference>
<dbReference type="FunFam" id="2.20.28.230:FF:000002">
    <property type="entry name" value="Interleukin-2 receptor subunit alpha"/>
    <property type="match status" value="1"/>
</dbReference>
<dbReference type="Gene3D" id="2.20.28.230">
    <property type="match status" value="2"/>
</dbReference>
<dbReference type="Gene3D" id="2.10.70.10">
    <property type="entry name" value="Complement Module, domain 1"/>
    <property type="match status" value="1"/>
</dbReference>
<dbReference type="InterPro" id="IPR015486">
    <property type="entry name" value="IL-2_rcpt_alpha"/>
</dbReference>
<dbReference type="InterPro" id="IPR035976">
    <property type="entry name" value="Sushi/SCR/CCP_sf"/>
</dbReference>
<dbReference type="InterPro" id="IPR000436">
    <property type="entry name" value="Sushi_SCR_CCP_dom"/>
</dbReference>
<dbReference type="PANTHER" id="PTHR10573">
    <property type="entry name" value="INTERLEUKIN-2 RECEPTOR ALPHA CHAIN"/>
    <property type="match status" value="1"/>
</dbReference>
<dbReference type="PANTHER" id="PTHR10573:SF0">
    <property type="entry name" value="INTERLEUKIN-2 RECEPTOR SUBUNIT ALPHA"/>
    <property type="match status" value="1"/>
</dbReference>
<dbReference type="SMART" id="SM00032">
    <property type="entry name" value="CCP"/>
    <property type="match status" value="2"/>
</dbReference>
<dbReference type="SUPFAM" id="SSF57535">
    <property type="entry name" value="Complement control module/SCR domain"/>
    <property type="match status" value="2"/>
</dbReference>
<dbReference type="PROSITE" id="PS50923">
    <property type="entry name" value="SUSHI"/>
    <property type="match status" value="2"/>
</dbReference>
<sequence>MEPSLLMWGFFTFTMIPGCMAGACVQQPPSLRNATFKILGYKVGTTLNCDCQRGFRRDPSSGPYMICRGNSSHSFWENKCQCMPTSSPRIPVKQVTPRPEEQKERKTTETQGQMQPPNQANLPGHCKEPPPWEHESLKRVYHFMEGQTVRYQCLPGFRDGSAQNNSAQSVCKKQEDQEVMRWTQPKLKCKSEKENGSFPEPQMSTAAPPTTKTSLPTRTKGTTDSQNLTEVPATMQPIIFTTQYQLAVAGCVLLLLSILLLSGLTWQRRR</sequence>
<evidence type="ECO:0000250" key="1"/>
<evidence type="ECO:0000250" key="2">
    <source>
        <dbReference type="UniProtKB" id="P01589"/>
    </source>
</evidence>
<evidence type="ECO:0000255" key="3"/>
<evidence type="ECO:0000255" key="4">
    <source>
        <dbReference type="PROSITE-ProRule" id="PRU00302"/>
    </source>
</evidence>
<evidence type="ECO:0000256" key="5">
    <source>
        <dbReference type="SAM" id="MobiDB-lite"/>
    </source>
</evidence>
<protein>
    <recommendedName>
        <fullName>Interleukin-2 receptor subunit alpha</fullName>
        <shortName>IL-2 receptor subunit alpha</shortName>
        <shortName>IL-2-RA</shortName>
        <shortName>IL-2R subunit alpha</shortName>
        <shortName>IL2-RA</shortName>
    </recommendedName>
    <cdAntigenName>CD25</cdAntigenName>
</protein>
<feature type="signal peptide" evidence="1">
    <location>
        <begin position="1"/>
        <end position="21"/>
    </location>
</feature>
<feature type="chain" id="PRO_0000011027" description="Interleukin-2 receptor subunit alpha">
    <location>
        <begin position="22"/>
        <end position="270"/>
    </location>
</feature>
<feature type="topological domain" description="Extracellular" evidence="3">
    <location>
        <begin position="22"/>
        <end position="245"/>
    </location>
</feature>
<feature type="transmembrane region" description="Helical" evidence="3">
    <location>
        <begin position="246"/>
        <end position="264"/>
    </location>
</feature>
<feature type="topological domain" description="Cytoplasmic" evidence="3">
    <location>
        <begin position="265"/>
        <end position="270"/>
    </location>
</feature>
<feature type="domain" description="Sushi 1" evidence="4">
    <location>
        <begin position="22"/>
        <end position="84"/>
    </location>
</feature>
<feature type="domain" description="Sushi 2" evidence="4">
    <location>
        <begin position="124"/>
        <end position="191"/>
    </location>
</feature>
<feature type="region of interest" description="Disordered" evidence="5">
    <location>
        <begin position="87"/>
        <end position="124"/>
    </location>
</feature>
<feature type="region of interest" description="Disordered" evidence="5">
    <location>
        <begin position="190"/>
        <end position="225"/>
    </location>
</feature>
<feature type="compositionally biased region" description="Basic and acidic residues" evidence="5">
    <location>
        <begin position="98"/>
        <end position="108"/>
    </location>
</feature>
<feature type="compositionally biased region" description="Polar residues" evidence="5">
    <location>
        <begin position="112"/>
        <end position="121"/>
    </location>
</feature>
<feature type="compositionally biased region" description="Polar residues" evidence="5">
    <location>
        <begin position="202"/>
        <end position="225"/>
    </location>
</feature>
<feature type="glycosylation site" description="N-linked (GlcNAc...) asparagine" evidence="3">
    <location>
        <position position="33"/>
    </location>
</feature>
<feature type="glycosylation site" description="N-linked (GlcNAc...) asparagine" evidence="3">
    <location>
        <position position="70"/>
    </location>
</feature>
<feature type="glycosylation site" description="N-linked (GlcNAc...) asparagine" evidence="3">
    <location>
        <position position="164"/>
    </location>
</feature>
<feature type="glycosylation site" description="N-linked (GlcNAc...) asparagine" evidence="3">
    <location>
        <position position="195"/>
    </location>
</feature>
<feature type="glycosylation site" description="N-linked (GlcNAc...) asparagine" evidence="3">
    <location>
        <position position="227"/>
    </location>
</feature>
<feature type="disulfide bond" evidence="4">
    <location>
        <begin position="24"/>
        <end position="67"/>
    </location>
</feature>
<feature type="disulfide bond" evidence="4">
    <location>
        <begin position="49"/>
        <end position="80"/>
    </location>
</feature>
<feature type="disulfide bond" evidence="4">
    <location>
        <begin position="51"/>
        <end position="82"/>
    </location>
</feature>
<feature type="disulfide bond" evidence="4">
    <location>
        <begin position="126"/>
        <end position="171"/>
    </location>
</feature>
<feature type="disulfide bond" evidence="4">
    <location>
        <begin position="153"/>
        <end position="189"/>
    </location>
</feature>
<reference key="1">
    <citation type="journal article" date="1997" name="Immunol. Cell Biol.">
        <title>cDNA cloning of porcine interleukin-2 receptor-alpha gene.</title>
        <authorList>
            <person name="Kokuho T."/>
            <person name="Uchimura A."/>
            <person name="Inumaru S."/>
        </authorList>
    </citation>
    <scope>NUCLEOTIDE SEQUENCE [MRNA]</scope>
</reference>
<accession>O02733</accession>
<comment type="function">
    <text evidence="2">Receptor for interleukin-2. The receptor is involved in the regulation of immune tolerance by controlling regulatory T cells (TREGs) activity. TREGs suppress the activation and expansion of autoreactive T-cells.</text>
</comment>
<comment type="subunit">
    <text evidence="1">Non-covalent dimer of an alpha and a beta subunit. IL2R exists in 3 different forms: a high affinity dimer, an intermediate affinity monomer (beta subunit), and a low affinity monomer (alpha subunit). The high and intermediate affinity forms also associate with a gamma subunit (By similarity).</text>
</comment>
<comment type="subcellular location">
    <subcellularLocation>
        <location>Membrane</location>
        <topology>Single-pass type I membrane protein</topology>
    </subcellularLocation>
</comment>
<proteinExistence type="evidence at transcript level"/>